<accession>C4K8I1</accession>
<name>DCD_HAMD5</name>
<reference key="1">
    <citation type="journal article" date="2009" name="Proc. Natl. Acad. Sci. U.S.A.">
        <title>Hamiltonella defensa, genome evolution of protective bacterial endosymbiont from pathogenic ancestors.</title>
        <authorList>
            <person name="Degnan P.H."/>
            <person name="Yu Y."/>
            <person name="Sisneros N."/>
            <person name="Wing R.A."/>
            <person name="Moran N.A."/>
        </authorList>
    </citation>
    <scope>NUCLEOTIDE SEQUENCE [LARGE SCALE GENOMIC DNA]</scope>
    <source>
        <strain>5AT</strain>
    </source>
</reference>
<evidence type="ECO:0000255" key="1">
    <source>
        <dbReference type="HAMAP-Rule" id="MF_00146"/>
    </source>
</evidence>
<evidence type="ECO:0000256" key="2">
    <source>
        <dbReference type="SAM" id="MobiDB-lite"/>
    </source>
</evidence>
<dbReference type="EC" id="3.5.4.13" evidence="1"/>
<dbReference type="EMBL" id="CP001277">
    <property type="protein sequence ID" value="ACQ66818.1"/>
    <property type="molecule type" value="Genomic_DNA"/>
</dbReference>
<dbReference type="RefSeq" id="WP_012737783.1">
    <property type="nucleotide sequence ID" value="NC_012751.1"/>
</dbReference>
<dbReference type="SMR" id="C4K8I1"/>
<dbReference type="STRING" id="572265.HDEF_0043"/>
<dbReference type="GeneID" id="66259986"/>
<dbReference type="KEGG" id="hde:HDEF_0043"/>
<dbReference type="eggNOG" id="COG0717">
    <property type="taxonomic scope" value="Bacteria"/>
</dbReference>
<dbReference type="HOGENOM" id="CLU_087476_2_0_6"/>
<dbReference type="UniPathway" id="UPA00610">
    <property type="reaction ID" value="UER00665"/>
</dbReference>
<dbReference type="Proteomes" id="UP000002334">
    <property type="component" value="Chromosome"/>
</dbReference>
<dbReference type="GO" id="GO:0008829">
    <property type="term" value="F:dCTP deaminase activity"/>
    <property type="evidence" value="ECO:0007669"/>
    <property type="project" value="UniProtKB-UniRule"/>
</dbReference>
<dbReference type="GO" id="GO:0000166">
    <property type="term" value="F:nucleotide binding"/>
    <property type="evidence" value="ECO:0007669"/>
    <property type="project" value="UniProtKB-KW"/>
</dbReference>
<dbReference type="GO" id="GO:0006226">
    <property type="term" value="P:dUMP biosynthetic process"/>
    <property type="evidence" value="ECO:0007669"/>
    <property type="project" value="UniProtKB-UniPathway"/>
</dbReference>
<dbReference type="GO" id="GO:0006229">
    <property type="term" value="P:dUTP biosynthetic process"/>
    <property type="evidence" value="ECO:0007669"/>
    <property type="project" value="UniProtKB-UniRule"/>
</dbReference>
<dbReference type="GO" id="GO:0015949">
    <property type="term" value="P:nucleobase-containing small molecule interconversion"/>
    <property type="evidence" value="ECO:0007669"/>
    <property type="project" value="TreeGrafter"/>
</dbReference>
<dbReference type="CDD" id="cd07557">
    <property type="entry name" value="trimeric_dUTPase"/>
    <property type="match status" value="1"/>
</dbReference>
<dbReference type="FunFam" id="2.70.40.10:FF:000003">
    <property type="entry name" value="dCTP deaminase"/>
    <property type="match status" value="1"/>
</dbReference>
<dbReference type="Gene3D" id="2.70.40.10">
    <property type="match status" value="1"/>
</dbReference>
<dbReference type="HAMAP" id="MF_00146">
    <property type="entry name" value="dCTP_deaminase"/>
    <property type="match status" value="1"/>
</dbReference>
<dbReference type="InterPro" id="IPR011962">
    <property type="entry name" value="dCTP_deaminase"/>
</dbReference>
<dbReference type="InterPro" id="IPR036157">
    <property type="entry name" value="dUTPase-like_sf"/>
</dbReference>
<dbReference type="InterPro" id="IPR033704">
    <property type="entry name" value="dUTPase_trimeric"/>
</dbReference>
<dbReference type="NCBIfam" id="TIGR02274">
    <property type="entry name" value="dCTP_deam"/>
    <property type="match status" value="1"/>
</dbReference>
<dbReference type="PANTHER" id="PTHR42680">
    <property type="entry name" value="DCTP DEAMINASE"/>
    <property type="match status" value="1"/>
</dbReference>
<dbReference type="PANTHER" id="PTHR42680:SF3">
    <property type="entry name" value="DCTP DEAMINASE"/>
    <property type="match status" value="1"/>
</dbReference>
<dbReference type="Pfam" id="PF22769">
    <property type="entry name" value="DCD"/>
    <property type="match status" value="1"/>
</dbReference>
<dbReference type="SUPFAM" id="SSF51283">
    <property type="entry name" value="dUTPase-like"/>
    <property type="match status" value="1"/>
</dbReference>
<organism>
    <name type="scientific">Hamiltonella defensa subsp. Acyrthosiphon pisum (strain 5AT)</name>
    <dbReference type="NCBI Taxonomy" id="572265"/>
    <lineage>
        <taxon>Bacteria</taxon>
        <taxon>Pseudomonadati</taxon>
        <taxon>Pseudomonadota</taxon>
        <taxon>Gammaproteobacteria</taxon>
        <taxon>Enterobacterales</taxon>
        <taxon>Enterobacteriaceae</taxon>
        <taxon>aphid secondary symbionts</taxon>
        <taxon>Candidatus Hamiltonella</taxon>
    </lineage>
</organism>
<sequence length="193" mass="21739">MRLCDHDIERWLDEKKLTITPRPPAKHINGATVDIRLGHEFRVFVGHKAPFIDLSAPKEEINHALDQIMSDKIVLKEKECFFLHPGELALAVTLESVTIPDDLVGWLDGRSSLARLGLMVHVTAHRIDPGWRGQIVLEFYNSGKLPLGLRPGMLIGALSFELLSGQAKRPYHQRQDAKYHNQKGAVASRIDKD</sequence>
<feature type="chain" id="PRO_1000203360" description="dCTP deaminase">
    <location>
        <begin position="1"/>
        <end position="193"/>
    </location>
</feature>
<feature type="region of interest" description="Disordered" evidence="2">
    <location>
        <begin position="171"/>
        <end position="193"/>
    </location>
</feature>
<feature type="active site" description="Proton donor/acceptor" evidence="1">
    <location>
        <position position="138"/>
    </location>
</feature>
<feature type="binding site" evidence="1">
    <location>
        <begin position="110"/>
        <end position="115"/>
    </location>
    <ligand>
        <name>dCTP</name>
        <dbReference type="ChEBI" id="CHEBI:61481"/>
    </ligand>
</feature>
<feature type="binding site" evidence="1">
    <location>
        <position position="128"/>
    </location>
    <ligand>
        <name>dCTP</name>
        <dbReference type="ChEBI" id="CHEBI:61481"/>
    </ligand>
</feature>
<feature type="binding site" evidence="1">
    <location>
        <begin position="136"/>
        <end position="138"/>
    </location>
    <ligand>
        <name>dCTP</name>
        <dbReference type="ChEBI" id="CHEBI:61481"/>
    </ligand>
</feature>
<feature type="binding site" evidence="1">
    <location>
        <position position="171"/>
    </location>
    <ligand>
        <name>dCTP</name>
        <dbReference type="ChEBI" id="CHEBI:61481"/>
    </ligand>
</feature>
<feature type="binding site" evidence="1">
    <location>
        <position position="178"/>
    </location>
    <ligand>
        <name>dCTP</name>
        <dbReference type="ChEBI" id="CHEBI:61481"/>
    </ligand>
</feature>
<feature type="binding site" evidence="1">
    <location>
        <position position="182"/>
    </location>
    <ligand>
        <name>dCTP</name>
        <dbReference type="ChEBI" id="CHEBI:61481"/>
    </ligand>
</feature>
<proteinExistence type="inferred from homology"/>
<comment type="function">
    <text evidence="1">Catalyzes the deamination of dCTP to dUTP.</text>
</comment>
<comment type="catalytic activity">
    <reaction evidence="1">
        <text>dCTP + H2O + H(+) = dUTP + NH4(+)</text>
        <dbReference type="Rhea" id="RHEA:22680"/>
        <dbReference type="ChEBI" id="CHEBI:15377"/>
        <dbReference type="ChEBI" id="CHEBI:15378"/>
        <dbReference type="ChEBI" id="CHEBI:28938"/>
        <dbReference type="ChEBI" id="CHEBI:61481"/>
        <dbReference type="ChEBI" id="CHEBI:61555"/>
        <dbReference type="EC" id="3.5.4.13"/>
    </reaction>
</comment>
<comment type="pathway">
    <text evidence="1">Pyrimidine metabolism; dUMP biosynthesis; dUMP from dCTP (dUTP route): step 1/2.</text>
</comment>
<comment type="subunit">
    <text evidence="1">Homotrimer.</text>
</comment>
<comment type="similarity">
    <text evidence="1">Belongs to the dCTP deaminase family.</text>
</comment>
<keyword id="KW-0378">Hydrolase</keyword>
<keyword id="KW-0546">Nucleotide metabolism</keyword>
<keyword id="KW-0547">Nucleotide-binding</keyword>
<gene>
    <name evidence="1" type="primary">dcd</name>
    <name type="ordered locus">HDEF_0043</name>
</gene>
<protein>
    <recommendedName>
        <fullName evidence="1">dCTP deaminase</fullName>
        <ecNumber evidence="1">3.5.4.13</ecNumber>
    </recommendedName>
    <alternativeName>
        <fullName evidence="1">Deoxycytidine triphosphate deaminase</fullName>
    </alternativeName>
</protein>